<proteinExistence type="evidence at protein level"/>
<sequence>MRVLVLALTVALVAGNQVSYAPEFAPGKTYEYKYEGYILGGLPEEGLAKAGVKIQSKVLIGAAGPDSYILKLEDPVISGYSGIWPKEVFHPATKLTSALSAQLLTPVKFEYANGVIGKVFAPPGISTNVLNVFRGLLNMFQMNIKKTQNVYDLQETGVKGVCKTHYILHEDSKADRLHLTKTTDLNHCTDSIHMDVGMAGYTEKCAECMARGKTLSGAISVNYIMKPSASGTLILEATATELLQYSPVNIVNGAVQMEAKQTVTFVDIRKTPLEPLKADYIPRGSLKYELGTEFLQTPIQLLRITNVEAQIVESLNNLVSLNMGHAHEDSPLKFIELIQLLRVAKYESIEALWSQFKTKIDHRHWLLSSIPAIGTHVALKFIKEKIVAGEVTAAEAAQAIMSSTHLVKADLEAIKLQEGLAVTPNIRENAGLRELVMLGFGIMVHKYCVENPSCPSELVRPVHDIIAKALEKRDNDELSLALKVLGNAGHPSSLKPIMKLLPGFGSSASELELRVHIDATLALRKIGKREPKMIQDVALQLFMDRTLDPELRMVAVVVLFDTKLPMGLITTLAQSLLKEPNLQVLSFVYSYMKAFTKTTTPDHSTVAAACNVAIRILSPRFERLSYRYSRAFHYDHYHNPWMLGAAASAFYINDAATVLPKNIMAKARVYLSGVSVDVLEFGARAEGVQEALLKARDVPESADRLTKMKQALKALTEWRANPSRQPLGSLYVKVLGQDVAFANIDKEMVEKIIEFATGPEIRTRGKKALDALLSGYSMKYSKPMSAIEVRHIFPTSLGLPMELSLYTAAVTAASVEVQATISPPLPEDFHPAHLLKSDISMKASVTPSVSLHTYGVMGVNSPFIQASVLSRAKDHAALPKKMEARLDIVKGYFSYQFLPVEGVKTIASARLETVAIARDVEGLAAAKVTPVVPYEPIVSKNATLNLSQMSYYLNDSISASSELLPFSLQRQTGKNKIPKPIVKKMCATTYTYGIEGCVDIWSRNATFLRNTPIYAIIGNHSLLVNVTPAAGPSIERIEIEVQFGEQAAEKILKEVYLNEEEEVLEDKNVLMKLKKILSPGLKNSTKASSSSSGSSRSSRSRSSSSSSSSSSSSSSRSSSSSSRSSSSLRRNSKMLDLADPLNITSKRSSSSSSSSSSSSSSSSSSSSSSKTKWQLHERNFTKDHIHQHSVSKERLNSKSSASSFESIYNKITYLSNIVSPVVTVLVRAIRADHKNQGYQIAVYYDKLTTRVQIIVANLTEDDNWRICSDSMMLSHHKVMTRVTWGIGCKQYNTTIVAETGRVEKEPAVRVKLAWARLPTYIRDYARRVSRYISRVAEDNGVNRTKVASKPKEIKLTVAVANETSLNVTLNTPKNTFFKLGWVLPFYLPINNTAAELQAFQGRWMDQVTYMLTKSAAAECTVVEDTVVTFNNRKYKTETPHSCHQVLAQDCTSEIKFIVLLKRDQTAERNEISIKIENIDVDMYPKDNAVVVKVNGVEIPLTNLPYQHPTGNIQIRQREEGISLHAPSHGLQEVFLSLNKVQVKVVDWMRGQTCGLCGKADGEVRQEYSTPNERVSRNATSFAHSWVLPAKSCRDASECYMQLESVKLEKQISLEGEESKCYSVEPVWRCLPGCAPVRTTSVTVGLPCVSLDSNLNRSDSLSSIYQKSVDVSETAESHLACRCTPQCA</sequence>
<accession>Q98893</accession>
<dbReference type="EMBL" id="U70826">
    <property type="protein sequence ID" value="AAB17152.1"/>
    <property type="molecule type" value="mRNA"/>
</dbReference>
<dbReference type="PIR" id="T43144">
    <property type="entry name" value="T43144"/>
</dbReference>
<dbReference type="SMR" id="Q98893"/>
<dbReference type="STRING" id="8078.ENSFHEP00000003399"/>
<dbReference type="Proteomes" id="UP000265000">
    <property type="component" value="Whole Genome Shotgun Assembly"/>
</dbReference>
<dbReference type="GO" id="GO:0005319">
    <property type="term" value="F:lipid transporter activity"/>
    <property type="evidence" value="ECO:0007669"/>
    <property type="project" value="InterPro"/>
</dbReference>
<dbReference type="GO" id="GO:0045735">
    <property type="term" value="F:nutrient reservoir activity"/>
    <property type="evidence" value="ECO:0007669"/>
    <property type="project" value="UniProtKB-KW"/>
</dbReference>
<dbReference type="GO" id="GO:0071391">
    <property type="term" value="P:cellular response to estrogen stimulus"/>
    <property type="evidence" value="ECO:0007669"/>
    <property type="project" value="TreeGrafter"/>
</dbReference>
<dbReference type="GO" id="GO:0032355">
    <property type="term" value="P:response to estradiol"/>
    <property type="evidence" value="ECO:0007669"/>
    <property type="project" value="TreeGrafter"/>
</dbReference>
<dbReference type="FunFam" id="1.25.10.20:FF:000002">
    <property type="entry name" value="Vitellogenin 7"/>
    <property type="match status" value="1"/>
</dbReference>
<dbReference type="FunFam" id="2.20.80.10:FF:000001">
    <property type="entry name" value="Vitellogenin 7"/>
    <property type="match status" value="1"/>
</dbReference>
<dbReference type="FunFam" id="2.30.230.10:FF:000002">
    <property type="entry name" value="Vitellogenin 7"/>
    <property type="match status" value="1"/>
</dbReference>
<dbReference type="Gene3D" id="2.30.230.10">
    <property type="entry name" value="Lipovitellin, beta-sheet shell regions, chain A"/>
    <property type="match status" value="1"/>
</dbReference>
<dbReference type="Gene3D" id="2.20.80.10">
    <property type="entry name" value="Lipovitellin-phosvitin complex, chain A, domain 4"/>
    <property type="match status" value="1"/>
</dbReference>
<dbReference type="Gene3D" id="2.20.50.20">
    <property type="entry name" value="Lipovitellin. Chain A, domain 3"/>
    <property type="match status" value="2"/>
</dbReference>
<dbReference type="Gene3D" id="2.20.90.10">
    <property type="entry name" value="Vitellinogen, beta-sheet shell domain"/>
    <property type="match status" value="1"/>
</dbReference>
<dbReference type="Gene3D" id="1.25.10.20">
    <property type="entry name" value="Vitellinogen, superhelical"/>
    <property type="match status" value="1"/>
</dbReference>
<dbReference type="InterPro" id="IPR015819">
    <property type="entry name" value="Lipid_transp_b-sht_shell"/>
</dbReference>
<dbReference type="InterPro" id="IPR011030">
    <property type="entry name" value="Lipovitellin_superhlx_dom"/>
</dbReference>
<dbReference type="InterPro" id="IPR015816">
    <property type="entry name" value="Vitellinogen_b-sht_N"/>
</dbReference>
<dbReference type="InterPro" id="IPR015258">
    <property type="entry name" value="Vitellinogen_b-sht_shell"/>
</dbReference>
<dbReference type="InterPro" id="IPR037088">
    <property type="entry name" value="Vitellinogen_b-sht_shell_sf"/>
</dbReference>
<dbReference type="InterPro" id="IPR015255">
    <property type="entry name" value="Vitellinogen_open_b-sht"/>
</dbReference>
<dbReference type="InterPro" id="IPR015817">
    <property type="entry name" value="Vitellinogen_open_b-sht_sub1"/>
</dbReference>
<dbReference type="InterPro" id="IPR050733">
    <property type="entry name" value="Vitellogenin/Apolipophorin"/>
</dbReference>
<dbReference type="InterPro" id="IPR001747">
    <property type="entry name" value="Vitellogenin_N"/>
</dbReference>
<dbReference type="InterPro" id="IPR001846">
    <property type="entry name" value="VWF_type-D"/>
</dbReference>
<dbReference type="PANTHER" id="PTHR23345">
    <property type="entry name" value="VITELLOGENIN-RELATED"/>
    <property type="match status" value="1"/>
</dbReference>
<dbReference type="PANTHER" id="PTHR23345:SF9">
    <property type="entry name" value="VITELLOGENIN-RELATED"/>
    <property type="match status" value="1"/>
</dbReference>
<dbReference type="Pfam" id="PF09175">
    <property type="entry name" value="Vit_b-sht_shell"/>
    <property type="match status" value="1"/>
</dbReference>
<dbReference type="Pfam" id="PF09172">
    <property type="entry name" value="Vit_open_b-sht"/>
    <property type="match status" value="1"/>
</dbReference>
<dbReference type="Pfam" id="PF01347">
    <property type="entry name" value="Vitellogenin_N"/>
    <property type="match status" value="1"/>
</dbReference>
<dbReference type="Pfam" id="PF00094">
    <property type="entry name" value="VWD"/>
    <property type="match status" value="1"/>
</dbReference>
<dbReference type="SMART" id="SM01169">
    <property type="entry name" value="DUF1943"/>
    <property type="match status" value="1"/>
</dbReference>
<dbReference type="SMART" id="SM01170">
    <property type="entry name" value="DUF1944"/>
    <property type="match status" value="1"/>
</dbReference>
<dbReference type="SMART" id="SM00638">
    <property type="entry name" value="LPD_N"/>
    <property type="match status" value="1"/>
</dbReference>
<dbReference type="SMART" id="SM00216">
    <property type="entry name" value="VWD"/>
    <property type="match status" value="1"/>
</dbReference>
<dbReference type="SUPFAM" id="SSF56968">
    <property type="entry name" value="Lipovitellin-phosvitin complex, beta-sheet shell regions"/>
    <property type="match status" value="3"/>
</dbReference>
<dbReference type="SUPFAM" id="SSF48431">
    <property type="entry name" value="Lipovitellin-phosvitin complex, superhelical domain"/>
    <property type="match status" value="1"/>
</dbReference>
<dbReference type="PROSITE" id="PS51211">
    <property type="entry name" value="VITELLOGENIN"/>
    <property type="match status" value="1"/>
</dbReference>
<dbReference type="PROSITE" id="PS51233">
    <property type="entry name" value="VWFD"/>
    <property type="match status" value="1"/>
</dbReference>
<name>VIT2_FUNHE</name>
<keyword id="KW-0903">Direct protein sequencing</keyword>
<keyword id="KW-1015">Disulfide bond</keyword>
<keyword id="KW-0325">Glycoprotein</keyword>
<keyword id="KW-0597">Phosphoprotein</keyword>
<keyword id="KW-0732">Signal</keyword>
<keyword id="KW-0758">Storage protein</keyword>
<protein>
    <recommendedName>
        <fullName>Vitellogenin-2</fullName>
    </recommendedName>
    <alternativeName>
        <fullName>Vitellogenin II</fullName>
        <shortName>VTG II</shortName>
    </alternativeName>
    <component>
        <recommendedName>
            <fullName>Lipovitellin-1</fullName>
            <shortName>LV1</shortName>
        </recommendedName>
    </component>
    <component>
        <recommendedName>
            <fullName>Phosvitin</fullName>
            <shortName>PV</shortName>
        </recommendedName>
    </component>
    <component>
        <recommendedName>
            <fullName>Lipovitellin-2</fullName>
            <shortName>LV2</shortName>
        </recommendedName>
    </component>
</protein>
<feature type="signal peptide" evidence="2">
    <location>
        <begin position="1"/>
        <end position="15"/>
    </location>
</feature>
<feature type="chain" id="PRO_0000041568" description="Vitellogenin-2">
    <location>
        <begin position="16"/>
        <end position="1687"/>
    </location>
</feature>
<feature type="chain" id="PRO_0000041569" description="Lipovitellin-1">
    <location>
        <begin position="16"/>
        <end status="unknown"/>
    </location>
</feature>
<feature type="chain" id="PRO_0000041570" description="Phosvitin" evidence="1">
    <location>
        <begin position="1083" status="uncertain"/>
        <end position="1230" status="uncertain"/>
    </location>
</feature>
<feature type="chain" id="PRO_0000041571" description="Lipovitellin-2">
    <location>
        <begin status="unknown"/>
        <end position="1687"/>
    </location>
</feature>
<feature type="domain" description="Vitellogenin" evidence="3">
    <location>
        <begin position="24"/>
        <end position="663"/>
    </location>
</feature>
<feature type="domain" description="VWFD" evidence="4">
    <location>
        <begin position="1417"/>
        <end position="1593"/>
    </location>
</feature>
<feature type="region of interest" description="Disordered" evidence="5">
    <location>
        <begin position="1081"/>
        <end position="1174"/>
    </location>
</feature>
<feature type="compositionally biased region" description="Low complexity" evidence="5">
    <location>
        <begin position="1088"/>
        <end position="1127"/>
    </location>
</feature>
<feature type="compositionally biased region" description="Low complexity" evidence="5">
    <location>
        <begin position="1148"/>
        <end position="1169"/>
    </location>
</feature>
<feature type="glycosylation site" description="N-linked (GlcNAc...) asparagine" evidence="2">
    <location>
        <position position="941"/>
    </location>
</feature>
<feature type="glycosylation site" description="N-linked (GlcNAc...) asparagine" evidence="2">
    <location>
        <position position="945"/>
    </location>
</feature>
<feature type="glycosylation site" description="N-linked (GlcNAc...) asparagine" evidence="2">
    <location>
        <position position="954"/>
    </location>
</feature>
<feature type="glycosylation site" description="N-linked (GlcNAc...) asparagine" evidence="2">
    <location>
        <position position="1004"/>
    </location>
</feature>
<feature type="glycosylation site" description="N-linked (GlcNAc...) asparagine" evidence="2">
    <location>
        <position position="1019"/>
    </location>
</feature>
<feature type="glycosylation site" description="N-linked (GlcNAc...) asparagine" evidence="2">
    <location>
        <position position="1083"/>
    </location>
</feature>
<feature type="glycosylation site" description="N-linked (GlcNAc...) asparagine" evidence="2">
    <location>
        <position position="1142"/>
    </location>
</feature>
<feature type="glycosylation site" description="N-linked (GlcNAc...) asparagine" evidence="2">
    <location>
        <position position="1179"/>
    </location>
</feature>
<feature type="glycosylation site" description="N-linked (GlcNAc...) asparagine" evidence="2">
    <location>
        <position position="1257"/>
    </location>
</feature>
<feature type="glycosylation site" description="N-linked (GlcNAc...) asparagine" evidence="2">
    <location>
        <position position="1292"/>
    </location>
</feature>
<feature type="glycosylation site" description="N-linked (GlcNAc...) asparagine" evidence="2">
    <location>
        <position position="1342"/>
    </location>
</feature>
<feature type="glycosylation site" description="N-linked (GlcNAc...) asparagine" evidence="2">
    <location>
        <position position="1361"/>
    </location>
</feature>
<feature type="glycosylation site" description="N-linked (GlcNAc...) asparagine" evidence="2">
    <location>
        <position position="1366"/>
    </location>
</feature>
<feature type="glycosylation site" description="N-linked (GlcNAc...) asparagine" evidence="2">
    <location>
        <position position="1390"/>
    </location>
</feature>
<feature type="glycosylation site" description="N-linked (GlcNAc...) asparagine" evidence="2">
    <location>
        <position position="1577"/>
    </location>
</feature>
<feature type="glycosylation site" description="N-linked (GlcNAc...) asparagine" evidence="2">
    <location>
        <position position="1655"/>
    </location>
</feature>
<feature type="disulfide bond" evidence="4">
    <location>
        <begin position="1419"/>
        <end position="1556"/>
    </location>
</feature>
<feature type="disulfide bond" evidence="4">
    <location>
        <begin position="1442"/>
        <end position="1592"/>
    </location>
</feature>
<comment type="function">
    <text>Precursor of the egg-yolk proteins that are sources of nutrients during early development of oviparous organisms.</text>
</comment>
<comment type="tissue specificity">
    <text>Produced by the liver, secreted into the blood and then sequestered by receptor mediated endocytosis into growing oocytes, where it is generally cleaved, giving rise to the respective yolk components lipovitellins and phosvitin.</text>
</comment>
<comment type="induction">
    <text>By steroids (estrogen). Expression of VTG II is lower than that of VTG I.</text>
</comment>
<comment type="PTM">
    <text evidence="1">Phosvitin, an egg yolk storage protein, is one of the most highly phosphorylated (10%) proteins in nature.</text>
</comment>
<evidence type="ECO:0000250" key="1"/>
<evidence type="ECO:0000255" key="2"/>
<evidence type="ECO:0000255" key="3">
    <source>
        <dbReference type="PROSITE-ProRule" id="PRU00557"/>
    </source>
</evidence>
<evidence type="ECO:0000255" key="4">
    <source>
        <dbReference type="PROSITE-ProRule" id="PRU00580"/>
    </source>
</evidence>
<evidence type="ECO:0000256" key="5">
    <source>
        <dbReference type="SAM" id="MobiDB-lite"/>
    </source>
</evidence>
<organism>
    <name type="scientific">Fundulus heteroclitus</name>
    <name type="common">Killifish</name>
    <name type="synonym">Mummichog</name>
    <dbReference type="NCBI Taxonomy" id="8078"/>
    <lineage>
        <taxon>Eukaryota</taxon>
        <taxon>Metazoa</taxon>
        <taxon>Chordata</taxon>
        <taxon>Craniata</taxon>
        <taxon>Vertebrata</taxon>
        <taxon>Euteleostomi</taxon>
        <taxon>Actinopterygii</taxon>
        <taxon>Neopterygii</taxon>
        <taxon>Teleostei</taxon>
        <taxon>Neoteleostei</taxon>
        <taxon>Acanthomorphata</taxon>
        <taxon>Ovalentaria</taxon>
        <taxon>Atherinomorphae</taxon>
        <taxon>Cyprinodontiformes</taxon>
        <taxon>Fundulidae</taxon>
        <taxon>Fundulus</taxon>
    </lineage>
</organism>
<reference key="1">
    <citation type="journal article" date="1995" name="Int. Symp. Reprod. Physiol. Fish">
        <title>Liver-derived cDNAs: vitellogenins and vitelline envelope protein precursors (choriogenins).</title>
        <authorList>
            <person name="Lafleur G.J. Jr."/>
            <person name="Byrne B.M."/>
            <person name="Haux C."/>
            <person name="Greenberg R.M."/>
            <person name="Wallace R.A."/>
        </authorList>
    </citation>
    <scope>NUCLEOTIDE SEQUENCE [MRNA]</scope>
    <scope>PROTEIN SEQUENCE OF 16-35</scope>
    <source>
        <tissue>Liver</tissue>
    </source>
</reference>